<sequence length="196" mass="21313">MSQGLQLLFLGCACSLAPAMAMREVTVACSETADLPCTAPWDPQLSYAVSWAKVSESGTESVELPESKQNSSFEAPRRRAYSLTIQNTTICSSGTYRCALQELGGQRNLSGTVVLKVTGCPKEATESTFRKYRAEAVLLFSLVVFYLTLIIFTCKFARLQSIFPDISKPGTEQAFLPVTSPSKHLGPVTLPKTETV</sequence>
<name>CD83_MOUSE</name>
<feature type="signal peptide" evidence="3">
    <location>
        <begin position="1"/>
        <end position="21"/>
    </location>
</feature>
<feature type="chain" id="PRO_0000378451" description="CD83 antigen">
    <location>
        <begin position="22"/>
        <end position="196"/>
    </location>
</feature>
<feature type="topological domain" description="Extracellular" evidence="3">
    <location>
        <begin position="22"/>
        <end position="133"/>
    </location>
</feature>
<feature type="transmembrane region" description="Helical" evidence="3">
    <location>
        <begin position="134"/>
        <end position="154"/>
    </location>
</feature>
<feature type="topological domain" description="Cytoplasmic" evidence="3">
    <location>
        <begin position="155"/>
        <end position="196"/>
    </location>
</feature>
<feature type="domain" description="Ig-like V-type">
    <location>
        <begin position="22"/>
        <end position="110"/>
    </location>
</feature>
<feature type="glycosylation site" description="N-linked (GlcNAc...) asparagine" evidence="3">
    <location>
        <position position="70"/>
    </location>
</feature>
<feature type="glycosylation site" description="N-linked (GlcNAc...) asparagine" evidence="3">
    <location>
        <position position="87"/>
    </location>
</feature>
<feature type="glycosylation site" description="N-linked (GlcNAc...) asparagine" evidence="3">
    <location>
        <position position="108"/>
    </location>
</feature>
<feature type="disulfide bond" evidence="4">
    <location>
        <begin position="37"/>
        <end position="98"/>
    </location>
</feature>
<organism>
    <name type="scientific">Mus musculus</name>
    <name type="common">Mouse</name>
    <dbReference type="NCBI Taxonomy" id="10090"/>
    <lineage>
        <taxon>Eukaryota</taxon>
        <taxon>Metazoa</taxon>
        <taxon>Chordata</taxon>
        <taxon>Craniata</taxon>
        <taxon>Vertebrata</taxon>
        <taxon>Euteleostomi</taxon>
        <taxon>Mammalia</taxon>
        <taxon>Eutheria</taxon>
        <taxon>Euarchontoglires</taxon>
        <taxon>Glires</taxon>
        <taxon>Rodentia</taxon>
        <taxon>Myomorpha</taxon>
        <taxon>Muroidea</taxon>
        <taxon>Muridae</taxon>
        <taxon>Murinae</taxon>
        <taxon>Mus</taxon>
        <taxon>Mus</taxon>
    </lineage>
</organism>
<keyword id="KW-1015">Disulfide bond</keyword>
<keyword id="KW-0325">Glycoprotein</keyword>
<keyword id="KW-0393">Immunoglobulin domain</keyword>
<keyword id="KW-0472">Membrane</keyword>
<keyword id="KW-1185">Reference proteome</keyword>
<keyword id="KW-0732">Signal</keyword>
<keyword id="KW-0812">Transmembrane</keyword>
<keyword id="KW-1133">Transmembrane helix</keyword>
<accession>O88324</accession>
<proteinExistence type="evidence at transcript level"/>
<dbReference type="EMBL" id="AF001036">
    <property type="protein sequence ID" value="AAC83185.1"/>
    <property type="molecule type" value="mRNA"/>
</dbReference>
<dbReference type="EMBL" id="AF001041">
    <property type="protein sequence ID" value="AAC83186.1"/>
    <property type="molecule type" value="Genomic_DNA"/>
</dbReference>
<dbReference type="EMBL" id="AF001037">
    <property type="protein sequence ID" value="AAC83186.1"/>
    <property type="status" value="JOINED"/>
    <property type="molecule type" value="Genomic_DNA"/>
</dbReference>
<dbReference type="EMBL" id="AF001038">
    <property type="protein sequence ID" value="AAC83186.1"/>
    <property type="status" value="JOINED"/>
    <property type="molecule type" value="Genomic_DNA"/>
</dbReference>
<dbReference type="EMBL" id="AF001039">
    <property type="protein sequence ID" value="AAC83186.1"/>
    <property type="status" value="JOINED"/>
    <property type="molecule type" value="Genomic_DNA"/>
</dbReference>
<dbReference type="EMBL" id="AF001040">
    <property type="protein sequence ID" value="AAC83186.1"/>
    <property type="status" value="JOINED"/>
    <property type="molecule type" value="Genomic_DNA"/>
</dbReference>
<dbReference type="EMBL" id="AJ245551">
    <property type="protein sequence ID" value="CAB63843.1"/>
    <property type="molecule type" value="mRNA"/>
</dbReference>
<dbReference type="EMBL" id="AK075888">
    <property type="protein sequence ID" value="BAC36032.1"/>
    <property type="molecule type" value="mRNA"/>
</dbReference>
<dbReference type="EMBL" id="AK139410">
    <property type="protein sequence ID" value="BAE23999.1"/>
    <property type="molecule type" value="mRNA"/>
</dbReference>
<dbReference type="EMBL" id="AK154862">
    <property type="protein sequence ID" value="BAE32886.1"/>
    <property type="molecule type" value="mRNA"/>
</dbReference>
<dbReference type="EMBL" id="AK156386">
    <property type="protein sequence ID" value="BAE33694.1"/>
    <property type="molecule type" value="mRNA"/>
</dbReference>
<dbReference type="EMBL" id="AK171716">
    <property type="protein sequence ID" value="BAE42629.1"/>
    <property type="molecule type" value="mRNA"/>
</dbReference>
<dbReference type="EMBL" id="AK172396">
    <property type="protein sequence ID" value="BAE42984.1"/>
    <property type="molecule type" value="mRNA"/>
</dbReference>
<dbReference type="EMBL" id="AK172449">
    <property type="protein sequence ID" value="BAE43011.1"/>
    <property type="molecule type" value="mRNA"/>
</dbReference>
<dbReference type="EMBL" id="AK172466">
    <property type="protein sequence ID" value="BAE43020.1"/>
    <property type="molecule type" value="mRNA"/>
</dbReference>
<dbReference type="EMBL" id="CH466546">
    <property type="protein sequence ID" value="EDL41001.1"/>
    <property type="molecule type" value="Genomic_DNA"/>
</dbReference>
<dbReference type="EMBL" id="BC107344">
    <property type="protein sequence ID" value="AAI07345.1"/>
    <property type="molecule type" value="mRNA"/>
</dbReference>
<dbReference type="EMBL" id="BC107345">
    <property type="protein sequence ID" value="AAI07346.1"/>
    <property type="molecule type" value="mRNA"/>
</dbReference>
<dbReference type="CCDS" id="CCDS26481.1"/>
<dbReference type="RefSeq" id="NP_033986.1">
    <property type="nucleotide sequence ID" value="NM_009856.4"/>
</dbReference>
<dbReference type="SMR" id="O88324"/>
<dbReference type="BioGRID" id="198615">
    <property type="interactions" value="1"/>
</dbReference>
<dbReference type="FunCoup" id="O88324">
    <property type="interactions" value="605"/>
</dbReference>
<dbReference type="STRING" id="10090.ENSMUSP00000015540"/>
<dbReference type="GlyCosmos" id="O88324">
    <property type="glycosylation" value="3 sites, No reported glycans"/>
</dbReference>
<dbReference type="GlyGen" id="O88324">
    <property type="glycosylation" value="3 sites, 2 N-linked glycans (3 sites)"/>
</dbReference>
<dbReference type="iPTMnet" id="O88324"/>
<dbReference type="PhosphoSitePlus" id="O88324"/>
<dbReference type="SwissPalm" id="O88324"/>
<dbReference type="PaxDb" id="10090-ENSMUSP00000015540"/>
<dbReference type="ProteomicsDB" id="280029"/>
<dbReference type="Antibodypedia" id="3744">
    <property type="antibodies" value="1011 antibodies from 44 providers"/>
</dbReference>
<dbReference type="DNASU" id="12522"/>
<dbReference type="Ensembl" id="ENSMUST00000015540.4">
    <property type="protein sequence ID" value="ENSMUSP00000015540.3"/>
    <property type="gene ID" value="ENSMUSG00000015396.5"/>
</dbReference>
<dbReference type="GeneID" id="12522"/>
<dbReference type="KEGG" id="mmu:12522"/>
<dbReference type="UCSC" id="uc007qgj.2">
    <property type="organism name" value="mouse"/>
</dbReference>
<dbReference type="AGR" id="MGI:1328316"/>
<dbReference type="CTD" id="9308"/>
<dbReference type="MGI" id="MGI:1328316">
    <property type="gene designation" value="Cd83"/>
</dbReference>
<dbReference type="VEuPathDB" id="HostDB:ENSMUSG00000015396"/>
<dbReference type="eggNOG" id="ENOG502S7FP">
    <property type="taxonomic scope" value="Eukaryota"/>
</dbReference>
<dbReference type="GeneTree" id="ENSGT00390000007302"/>
<dbReference type="HOGENOM" id="CLU_099481_0_0_1"/>
<dbReference type="InParanoid" id="O88324"/>
<dbReference type="OMA" id="SWYKMAG"/>
<dbReference type="OrthoDB" id="9422899at2759"/>
<dbReference type="PhylomeDB" id="O88324"/>
<dbReference type="TreeFam" id="TF337861"/>
<dbReference type="BioGRID-ORCS" id="12522">
    <property type="hits" value="3 hits in 78 CRISPR screens"/>
</dbReference>
<dbReference type="ChiTaRS" id="Cd83">
    <property type="organism name" value="mouse"/>
</dbReference>
<dbReference type="PRO" id="PR:O88324"/>
<dbReference type="Proteomes" id="UP000000589">
    <property type="component" value="Chromosome 13"/>
</dbReference>
<dbReference type="RNAct" id="O88324">
    <property type="molecule type" value="protein"/>
</dbReference>
<dbReference type="Bgee" id="ENSMUSG00000015396">
    <property type="expression patterns" value="Expressed in peripheral lymph node and 200 other cell types or tissues"/>
</dbReference>
<dbReference type="GO" id="GO:0009897">
    <property type="term" value="C:external side of plasma membrane"/>
    <property type="evidence" value="ECO:0000314"/>
    <property type="project" value="MGI"/>
</dbReference>
<dbReference type="GO" id="GO:0043367">
    <property type="term" value="P:CD4-positive, alpha-beta T cell differentiation"/>
    <property type="evidence" value="ECO:0000315"/>
    <property type="project" value="MGI"/>
</dbReference>
<dbReference type="GO" id="GO:0032713">
    <property type="term" value="P:negative regulation of interleukin-4 production"/>
    <property type="evidence" value="ECO:0000315"/>
    <property type="project" value="MGI"/>
</dbReference>
<dbReference type="GO" id="GO:0043372">
    <property type="term" value="P:positive regulation of CD4-positive, alpha-beta T cell differentiation"/>
    <property type="evidence" value="ECO:0000315"/>
    <property type="project" value="MGI"/>
</dbReference>
<dbReference type="GO" id="GO:0032733">
    <property type="term" value="P:positive regulation of interleukin-10 production"/>
    <property type="evidence" value="ECO:0000315"/>
    <property type="project" value="MGI"/>
</dbReference>
<dbReference type="GO" id="GO:0032743">
    <property type="term" value="P:positive regulation of interleukin-2 production"/>
    <property type="evidence" value="ECO:0000315"/>
    <property type="project" value="MGI"/>
</dbReference>
<dbReference type="FunFam" id="2.60.40.10:FF:001910">
    <property type="entry name" value="CD83 molecule"/>
    <property type="match status" value="1"/>
</dbReference>
<dbReference type="Gene3D" id="2.60.40.10">
    <property type="entry name" value="Immunoglobulins"/>
    <property type="match status" value="1"/>
</dbReference>
<dbReference type="InterPro" id="IPR007110">
    <property type="entry name" value="Ig-like_dom"/>
</dbReference>
<dbReference type="InterPro" id="IPR036179">
    <property type="entry name" value="Ig-like_dom_sf"/>
</dbReference>
<dbReference type="InterPro" id="IPR013783">
    <property type="entry name" value="Ig-like_fold"/>
</dbReference>
<dbReference type="InterPro" id="IPR003599">
    <property type="entry name" value="Ig_sub"/>
</dbReference>
<dbReference type="InterPro" id="IPR013106">
    <property type="entry name" value="Ig_V-set"/>
</dbReference>
<dbReference type="PANTHER" id="PTHR15193">
    <property type="entry name" value="CD83 ANTIGEN"/>
    <property type="match status" value="1"/>
</dbReference>
<dbReference type="PANTHER" id="PTHR15193:SF1">
    <property type="entry name" value="CD83 ANTIGEN"/>
    <property type="match status" value="1"/>
</dbReference>
<dbReference type="Pfam" id="PF07686">
    <property type="entry name" value="V-set"/>
    <property type="match status" value="1"/>
</dbReference>
<dbReference type="SMART" id="SM00409">
    <property type="entry name" value="IG"/>
    <property type="match status" value="1"/>
</dbReference>
<dbReference type="SUPFAM" id="SSF48726">
    <property type="entry name" value="Immunoglobulin"/>
    <property type="match status" value="1"/>
</dbReference>
<dbReference type="PROSITE" id="PS50835">
    <property type="entry name" value="IG_LIKE"/>
    <property type="match status" value="1"/>
</dbReference>
<protein>
    <recommendedName>
        <fullName>CD83 antigen</fullName>
        <shortName>mCD83</shortName>
    </recommendedName>
    <cdAntigenName>CD83</cdAntigenName>
</protein>
<evidence type="ECO:0000250" key="1"/>
<evidence type="ECO:0000250" key="2">
    <source>
        <dbReference type="UniProtKB" id="Q01151"/>
    </source>
</evidence>
<evidence type="ECO:0000255" key="3"/>
<evidence type="ECO:0000255" key="4">
    <source>
        <dbReference type="PROSITE-ProRule" id="PRU00114"/>
    </source>
</evidence>
<evidence type="ECO:0000269" key="5">
    <source>
    </source>
</evidence>
<evidence type="ECO:0000269" key="6">
    <source>
    </source>
</evidence>
<evidence type="ECO:0000269" key="7">
    <source>
    </source>
</evidence>
<evidence type="ECO:0000269" key="8">
    <source>
    </source>
</evidence>
<gene>
    <name type="primary">Cd83</name>
</gene>
<comment type="function">
    <text evidence="2 5 6 7">Transmembrane glycoprotein predominantly found on the surface of many immune cells including dendritic cells or lymphocytes that plays various roles in immune response regulation. Plays an essential role in CD4(+) T-selection, differentiation and stability by regulating the activity of the major E3 ubiquitin ligase responsible for controlling MHC II trafficking MARCHF8 (PubMed:27503071, PubMed:27503069). Also inhibits MARCHF1 association with MHC II and ubiquitination of MHCII (By similarity). In addition, acts as an important modulator of protective responses against acute infections (PubMed:31527313).</text>
</comment>
<comment type="subunit">
    <text evidence="2">Monomer. Homodimer. Homotrimer. Interacts with MARCHF1; this interaction antagonizes MARCHF1-mediated MHC II and CD86 down-regulation.</text>
</comment>
<comment type="subcellular location">
    <subcellularLocation>
        <location evidence="1">Membrane</location>
        <topology evidence="1">Single-pass type I membrane protein</topology>
    </subcellularLocation>
</comment>
<comment type="tissue specificity">
    <text evidence="8">Abundantly expressed in spleen and brain, but is also detected in most tissues analyzed.</text>
</comment>
<comment type="disruption phenotype">
    <text evidence="6 7">Lack of CD83 expression on dendritic cells enhances immune responses to acute infections and leads to a reduced expression of MHC-II and an exacerbated autoimmune neuroinflammation (PubMed:31527313). In addition, CD83 deficiency does not result in excessive negative selection but affects the size of the CD4 single-positive compartment through a defect in positive selection (PubMed:27503071).</text>
</comment>
<reference key="1">
    <citation type="journal article" date="1998" name="Immunogenetics">
        <title>The mouse Cd83 gene: structure, domain organization, and chromosome localization.</title>
        <authorList>
            <person name="Twist C.J."/>
            <person name="Beier D.R."/>
            <person name="Disteche C.M."/>
            <person name="Edelhoff S."/>
            <person name="Tedder T.F."/>
        </authorList>
    </citation>
    <scope>NUCLEOTIDE SEQUENCE [GENOMIC DNA / MRNA]</scope>
    <scope>TISSUE SPECIFICITY</scope>
    <source>
        <strain>129</strain>
    </source>
</reference>
<reference key="2">
    <citation type="submission" date="1999-08" db="EMBL/GenBank/DDBJ databases">
        <title>Cloning, recombinant expression and biochemical characterization of the murine CD83 molecule, which is specifically up-regulated during dendritic cell maturation.</title>
        <authorList>
            <person name="Berchtold S."/>
            <person name="Muehl-Zuerbes P."/>
            <person name="Heufler C."/>
            <person name="Winklehner P."/>
            <person name="Schuler G."/>
            <person name="Steinkasserer A."/>
        </authorList>
    </citation>
    <scope>NUCLEOTIDE SEQUENCE [MRNA]</scope>
</reference>
<reference key="3">
    <citation type="journal article" date="2005" name="Science">
        <title>The transcriptional landscape of the mammalian genome.</title>
        <authorList>
            <person name="Carninci P."/>
            <person name="Kasukawa T."/>
            <person name="Katayama S."/>
            <person name="Gough J."/>
            <person name="Frith M.C."/>
            <person name="Maeda N."/>
            <person name="Oyama R."/>
            <person name="Ravasi T."/>
            <person name="Lenhard B."/>
            <person name="Wells C."/>
            <person name="Kodzius R."/>
            <person name="Shimokawa K."/>
            <person name="Bajic V.B."/>
            <person name="Brenner S.E."/>
            <person name="Batalov S."/>
            <person name="Forrest A.R."/>
            <person name="Zavolan M."/>
            <person name="Davis M.J."/>
            <person name="Wilming L.G."/>
            <person name="Aidinis V."/>
            <person name="Allen J.E."/>
            <person name="Ambesi-Impiombato A."/>
            <person name="Apweiler R."/>
            <person name="Aturaliya R.N."/>
            <person name="Bailey T.L."/>
            <person name="Bansal M."/>
            <person name="Baxter L."/>
            <person name="Beisel K.W."/>
            <person name="Bersano T."/>
            <person name="Bono H."/>
            <person name="Chalk A.M."/>
            <person name="Chiu K.P."/>
            <person name="Choudhary V."/>
            <person name="Christoffels A."/>
            <person name="Clutterbuck D.R."/>
            <person name="Crowe M.L."/>
            <person name="Dalla E."/>
            <person name="Dalrymple B.P."/>
            <person name="de Bono B."/>
            <person name="Della Gatta G."/>
            <person name="di Bernardo D."/>
            <person name="Down T."/>
            <person name="Engstrom P."/>
            <person name="Fagiolini M."/>
            <person name="Faulkner G."/>
            <person name="Fletcher C.F."/>
            <person name="Fukushima T."/>
            <person name="Furuno M."/>
            <person name="Futaki S."/>
            <person name="Gariboldi M."/>
            <person name="Georgii-Hemming P."/>
            <person name="Gingeras T.R."/>
            <person name="Gojobori T."/>
            <person name="Green R.E."/>
            <person name="Gustincich S."/>
            <person name="Harbers M."/>
            <person name="Hayashi Y."/>
            <person name="Hensch T.K."/>
            <person name="Hirokawa N."/>
            <person name="Hill D."/>
            <person name="Huminiecki L."/>
            <person name="Iacono M."/>
            <person name="Ikeo K."/>
            <person name="Iwama A."/>
            <person name="Ishikawa T."/>
            <person name="Jakt M."/>
            <person name="Kanapin A."/>
            <person name="Katoh M."/>
            <person name="Kawasawa Y."/>
            <person name="Kelso J."/>
            <person name="Kitamura H."/>
            <person name="Kitano H."/>
            <person name="Kollias G."/>
            <person name="Krishnan S.P."/>
            <person name="Kruger A."/>
            <person name="Kummerfeld S.K."/>
            <person name="Kurochkin I.V."/>
            <person name="Lareau L.F."/>
            <person name="Lazarevic D."/>
            <person name="Lipovich L."/>
            <person name="Liu J."/>
            <person name="Liuni S."/>
            <person name="McWilliam S."/>
            <person name="Madan Babu M."/>
            <person name="Madera M."/>
            <person name="Marchionni L."/>
            <person name="Matsuda H."/>
            <person name="Matsuzawa S."/>
            <person name="Miki H."/>
            <person name="Mignone F."/>
            <person name="Miyake S."/>
            <person name="Morris K."/>
            <person name="Mottagui-Tabar S."/>
            <person name="Mulder N."/>
            <person name="Nakano N."/>
            <person name="Nakauchi H."/>
            <person name="Ng P."/>
            <person name="Nilsson R."/>
            <person name="Nishiguchi S."/>
            <person name="Nishikawa S."/>
            <person name="Nori F."/>
            <person name="Ohara O."/>
            <person name="Okazaki Y."/>
            <person name="Orlando V."/>
            <person name="Pang K.C."/>
            <person name="Pavan W.J."/>
            <person name="Pavesi G."/>
            <person name="Pesole G."/>
            <person name="Petrovsky N."/>
            <person name="Piazza S."/>
            <person name="Reed J."/>
            <person name="Reid J.F."/>
            <person name="Ring B.Z."/>
            <person name="Ringwald M."/>
            <person name="Rost B."/>
            <person name="Ruan Y."/>
            <person name="Salzberg S.L."/>
            <person name="Sandelin A."/>
            <person name="Schneider C."/>
            <person name="Schoenbach C."/>
            <person name="Sekiguchi K."/>
            <person name="Semple C.A."/>
            <person name="Seno S."/>
            <person name="Sessa L."/>
            <person name="Sheng Y."/>
            <person name="Shibata Y."/>
            <person name="Shimada H."/>
            <person name="Shimada K."/>
            <person name="Silva D."/>
            <person name="Sinclair B."/>
            <person name="Sperling S."/>
            <person name="Stupka E."/>
            <person name="Sugiura K."/>
            <person name="Sultana R."/>
            <person name="Takenaka Y."/>
            <person name="Taki K."/>
            <person name="Tammoja K."/>
            <person name="Tan S.L."/>
            <person name="Tang S."/>
            <person name="Taylor M.S."/>
            <person name="Tegner J."/>
            <person name="Teichmann S.A."/>
            <person name="Ueda H.R."/>
            <person name="van Nimwegen E."/>
            <person name="Verardo R."/>
            <person name="Wei C.L."/>
            <person name="Yagi K."/>
            <person name="Yamanishi H."/>
            <person name="Zabarovsky E."/>
            <person name="Zhu S."/>
            <person name="Zimmer A."/>
            <person name="Hide W."/>
            <person name="Bult C."/>
            <person name="Grimmond S.M."/>
            <person name="Teasdale R.D."/>
            <person name="Liu E.T."/>
            <person name="Brusic V."/>
            <person name="Quackenbush J."/>
            <person name="Wahlestedt C."/>
            <person name="Mattick J.S."/>
            <person name="Hume D.A."/>
            <person name="Kai C."/>
            <person name="Sasaki D."/>
            <person name="Tomaru Y."/>
            <person name="Fukuda S."/>
            <person name="Kanamori-Katayama M."/>
            <person name="Suzuki M."/>
            <person name="Aoki J."/>
            <person name="Arakawa T."/>
            <person name="Iida J."/>
            <person name="Imamura K."/>
            <person name="Itoh M."/>
            <person name="Kato T."/>
            <person name="Kawaji H."/>
            <person name="Kawagashira N."/>
            <person name="Kawashima T."/>
            <person name="Kojima M."/>
            <person name="Kondo S."/>
            <person name="Konno H."/>
            <person name="Nakano K."/>
            <person name="Ninomiya N."/>
            <person name="Nishio T."/>
            <person name="Okada M."/>
            <person name="Plessy C."/>
            <person name="Shibata K."/>
            <person name="Shiraki T."/>
            <person name="Suzuki S."/>
            <person name="Tagami M."/>
            <person name="Waki K."/>
            <person name="Watahiki A."/>
            <person name="Okamura-Oho Y."/>
            <person name="Suzuki H."/>
            <person name="Kawai J."/>
            <person name="Hayashizaki Y."/>
        </authorList>
    </citation>
    <scope>NUCLEOTIDE SEQUENCE [LARGE SCALE MRNA]</scope>
    <source>
        <strain>C57BL/6J</strain>
        <strain>NOD</strain>
        <tissue>Brain cortex</tissue>
        <tissue>Spleen</tissue>
        <tissue>Tongue</tissue>
    </source>
</reference>
<reference key="4">
    <citation type="submission" date="2005-07" db="EMBL/GenBank/DDBJ databases">
        <authorList>
            <person name="Mural R.J."/>
            <person name="Adams M.D."/>
            <person name="Myers E.W."/>
            <person name="Smith H.O."/>
            <person name="Venter J.C."/>
        </authorList>
    </citation>
    <scope>NUCLEOTIDE SEQUENCE [LARGE SCALE GENOMIC DNA]</scope>
</reference>
<reference key="5">
    <citation type="journal article" date="2004" name="Genome Res.">
        <title>The status, quality, and expansion of the NIH full-length cDNA project: the Mammalian Gene Collection (MGC).</title>
        <authorList>
            <consortium name="The MGC Project Team"/>
        </authorList>
    </citation>
    <scope>NUCLEOTIDE SEQUENCE [LARGE SCALE MRNA]</scope>
</reference>
<reference key="6">
    <citation type="journal article" date="2016" name="J. Exp. Med.">
        <title>Thymic CD4 T cell selection requires attenuation of March8-mediated MHCII turnover in cortical epithelial cells through CD83.</title>
        <authorList>
            <person name="von Rohrscheidt J."/>
            <person name="Petrozziello E."/>
            <person name="Nedjic J."/>
            <person name="Federle C."/>
            <person name="Krzyzak L."/>
            <person name="Ploegh H.L."/>
            <person name="Ishido S."/>
            <person name="Steinkasserer A."/>
            <person name="Klein L."/>
        </authorList>
    </citation>
    <scope>FUNCTION</scope>
    <scope>DISRUPTION PHENOTYPE</scope>
</reference>
<reference key="7">
    <citation type="journal article" date="2016" name="J. Exp. Med.">
        <title>Ubiquitin ligase MARCH 8 cooperates with CD83 to control surface MHC II expression in thymic epithelium and CD4 T cell selection.</title>
        <authorList>
            <person name="Liu H."/>
            <person name="Jain R."/>
            <person name="Guan J."/>
            <person name="Vuong V."/>
            <person name="Ishido S."/>
            <person name="La Gruta N.L."/>
            <person name="Gray D.H."/>
            <person name="Villadangos J.A."/>
            <person name="Mintern J.D."/>
        </authorList>
    </citation>
    <scope>FUNCTION</scope>
</reference>
<reference key="8">
    <citation type="journal article" date="2019" name="JCI Insight">
        <title>CD83 orchestrates immunity toward self and non-self in dendritic cells.</title>
        <authorList>
            <person name="Wild A.B."/>
            <person name="Krzyzak L."/>
            <person name="Peckert K."/>
            <person name="Stich L."/>
            <person name="Kuhnt C."/>
            <person name="Butterhof A."/>
            <person name="Seitz C."/>
            <person name="Mattner J."/>
            <person name="Gruener N."/>
            <person name="Gaensbauer M."/>
            <person name="Purtak M."/>
            <person name="Soulat D."/>
            <person name="Winkler T.H."/>
            <person name="Nitschke L."/>
            <person name="Zinser E."/>
            <person name="Steinkasserer A."/>
        </authorList>
    </citation>
    <scope>FUNCTION</scope>
    <scope>DISRUPTION PHENOTYPE</scope>
</reference>